<accession>B2RUJ5</accession>
<accession>Q3UH49</accession>
<accession>Q8BMF2</accession>
<proteinExistence type="evidence at protein level"/>
<organism>
    <name type="scientific">Mus musculus</name>
    <name type="common">Mouse</name>
    <dbReference type="NCBI Taxonomy" id="10090"/>
    <lineage>
        <taxon>Eukaryota</taxon>
        <taxon>Metazoa</taxon>
        <taxon>Chordata</taxon>
        <taxon>Craniata</taxon>
        <taxon>Vertebrata</taxon>
        <taxon>Euteleostomi</taxon>
        <taxon>Mammalia</taxon>
        <taxon>Eutheria</taxon>
        <taxon>Euarchontoglires</taxon>
        <taxon>Glires</taxon>
        <taxon>Rodentia</taxon>
        <taxon>Myomorpha</taxon>
        <taxon>Muroidea</taxon>
        <taxon>Muridae</taxon>
        <taxon>Murinae</taxon>
        <taxon>Mus</taxon>
        <taxon>Mus</taxon>
    </lineage>
</organism>
<sequence length="842" mass="92909">MNHLEGSAEVEVADEAPGGEVNESVEADLEHPEVVEGQQPSPSPPPPAGHEPEDHRGHPAPPPPPPPQEEEEEERGECLARSASTESGFHNHTDTAEGDVLAAARDGYEAERAQDADDESAYAVQYRPEAEEYTEQAEAEHVEAAQRRALPNHLHFHSLEHEEAMNAAYSGYVYTHRLFHRAEDEPYAEPYADYGGLQEHVYEEIGDAPELEARDGLRLYERERDEAAAYRQEALGARLHHYDERSDGESDSPEKEAEFAPYPRMDSYEQEEDIDQIVAEVKQSMSSQSLDKAAEDMPEAEQDLERAPTPGGGHPDSPGLPAPAGQQQRVVGTPGGSEVGQRYSKEKRDAISLAIKDIKEAIEEVKTRTIRSPYTPDEPKEPIWVMRQDISPTRDCDDQRPVDGDSPSPGSSSPLGAESSSIPLHPGDPTEASTNKESRKSLASFPTYVEVPGPCDPEDLIDGIIFAANYLGSTQLLSDKTPSKNVRMMQAQEAVSRIKTAQKLAKSRKKAPEGESQPMTEVDLFISTQRIKVLNADTQEPMMDHPLRTISYIADIGNIVVLMARRRMPRSNSQENVEASHPSQDGKRQYKMICHVFESEDAQLIAQSIGQAFSVAYQEFLRANGINPEDLSQKEYSDLLNTQDMYNDDLIHFSKSENCKDVFIEKQKGEILGVVIVESGWGSILPTVIIANMMHGGPAEKSGKLNIGDQIMSINGTSLVGLPLSTCQSIIKGLKNQSRVKLNIVRCPPVTTVLIRRPDLRYQLGFSVQNGIICSLMRGGIAERGGVRVGHRIIEINGQSVVATPHEKIVHILSNAVGEIHMKTMPAAMYRLLTAQEQPVYI</sequence>
<evidence type="ECO:0000250" key="1"/>
<evidence type="ECO:0000250" key="2">
    <source>
        <dbReference type="UniProtKB" id="O35430"/>
    </source>
</evidence>
<evidence type="ECO:0000255" key="3">
    <source>
        <dbReference type="PROSITE-ProRule" id="PRU00143"/>
    </source>
</evidence>
<evidence type="ECO:0000255" key="4">
    <source>
        <dbReference type="PROSITE-ProRule" id="PRU00148"/>
    </source>
</evidence>
<evidence type="ECO:0000256" key="5">
    <source>
        <dbReference type="SAM" id="MobiDB-lite"/>
    </source>
</evidence>
<evidence type="ECO:0000269" key="6">
    <source>
    </source>
</evidence>
<evidence type="ECO:0000269" key="7">
    <source>
    </source>
</evidence>
<evidence type="ECO:0000269" key="8">
    <source>
    </source>
</evidence>
<evidence type="ECO:0000303" key="9">
    <source>
    </source>
</evidence>
<evidence type="ECO:0000303" key="10">
    <source>
    </source>
</evidence>
<evidence type="ECO:0000305" key="11"/>
<evidence type="ECO:0000312" key="12">
    <source>
        <dbReference type="MGI" id="MGI:1860297"/>
    </source>
</evidence>
<evidence type="ECO:0007744" key="13">
    <source>
    </source>
</evidence>
<evidence type="ECO:0007829" key="14">
    <source>
        <dbReference type="PDB" id="6LNM"/>
    </source>
</evidence>
<reference key="1">
    <citation type="journal article" date="2005" name="Science">
        <title>The transcriptional landscape of the mammalian genome.</title>
        <authorList>
            <person name="Carninci P."/>
            <person name="Kasukawa T."/>
            <person name="Katayama S."/>
            <person name="Gough J."/>
            <person name="Frith M.C."/>
            <person name="Maeda N."/>
            <person name="Oyama R."/>
            <person name="Ravasi T."/>
            <person name="Lenhard B."/>
            <person name="Wells C."/>
            <person name="Kodzius R."/>
            <person name="Shimokawa K."/>
            <person name="Bajic V.B."/>
            <person name="Brenner S.E."/>
            <person name="Batalov S."/>
            <person name="Forrest A.R."/>
            <person name="Zavolan M."/>
            <person name="Davis M.J."/>
            <person name="Wilming L.G."/>
            <person name="Aidinis V."/>
            <person name="Allen J.E."/>
            <person name="Ambesi-Impiombato A."/>
            <person name="Apweiler R."/>
            <person name="Aturaliya R.N."/>
            <person name="Bailey T.L."/>
            <person name="Bansal M."/>
            <person name="Baxter L."/>
            <person name="Beisel K.W."/>
            <person name="Bersano T."/>
            <person name="Bono H."/>
            <person name="Chalk A.M."/>
            <person name="Chiu K.P."/>
            <person name="Choudhary V."/>
            <person name="Christoffels A."/>
            <person name="Clutterbuck D.R."/>
            <person name="Crowe M.L."/>
            <person name="Dalla E."/>
            <person name="Dalrymple B.P."/>
            <person name="de Bono B."/>
            <person name="Della Gatta G."/>
            <person name="di Bernardo D."/>
            <person name="Down T."/>
            <person name="Engstrom P."/>
            <person name="Fagiolini M."/>
            <person name="Faulkner G."/>
            <person name="Fletcher C.F."/>
            <person name="Fukushima T."/>
            <person name="Furuno M."/>
            <person name="Futaki S."/>
            <person name="Gariboldi M."/>
            <person name="Georgii-Hemming P."/>
            <person name="Gingeras T.R."/>
            <person name="Gojobori T."/>
            <person name="Green R.E."/>
            <person name="Gustincich S."/>
            <person name="Harbers M."/>
            <person name="Hayashi Y."/>
            <person name="Hensch T.K."/>
            <person name="Hirokawa N."/>
            <person name="Hill D."/>
            <person name="Huminiecki L."/>
            <person name="Iacono M."/>
            <person name="Ikeo K."/>
            <person name="Iwama A."/>
            <person name="Ishikawa T."/>
            <person name="Jakt M."/>
            <person name="Kanapin A."/>
            <person name="Katoh M."/>
            <person name="Kawasawa Y."/>
            <person name="Kelso J."/>
            <person name="Kitamura H."/>
            <person name="Kitano H."/>
            <person name="Kollias G."/>
            <person name="Krishnan S.P."/>
            <person name="Kruger A."/>
            <person name="Kummerfeld S.K."/>
            <person name="Kurochkin I.V."/>
            <person name="Lareau L.F."/>
            <person name="Lazarevic D."/>
            <person name="Lipovich L."/>
            <person name="Liu J."/>
            <person name="Liuni S."/>
            <person name="McWilliam S."/>
            <person name="Madan Babu M."/>
            <person name="Madera M."/>
            <person name="Marchionni L."/>
            <person name="Matsuda H."/>
            <person name="Matsuzawa S."/>
            <person name="Miki H."/>
            <person name="Mignone F."/>
            <person name="Miyake S."/>
            <person name="Morris K."/>
            <person name="Mottagui-Tabar S."/>
            <person name="Mulder N."/>
            <person name="Nakano N."/>
            <person name="Nakauchi H."/>
            <person name="Ng P."/>
            <person name="Nilsson R."/>
            <person name="Nishiguchi S."/>
            <person name="Nishikawa S."/>
            <person name="Nori F."/>
            <person name="Ohara O."/>
            <person name="Okazaki Y."/>
            <person name="Orlando V."/>
            <person name="Pang K.C."/>
            <person name="Pavan W.J."/>
            <person name="Pavesi G."/>
            <person name="Pesole G."/>
            <person name="Petrovsky N."/>
            <person name="Piazza S."/>
            <person name="Reed J."/>
            <person name="Reid J.F."/>
            <person name="Ring B.Z."/>
            <person name="Ringwald M."/>
            <person name="Rost B."/>
            <person name="Ruan Y."/>
            <person name="Salzberg S.L."/>
            <person name="Sandelin A."/>
            <person name="Schneider C."/>
            <person name="Schoenbach C."/>
            <person name="Sekiguchi K."/>
            <person name="Semple C.A."/>
            <person name="Seno S."/>
            <person name="Sessa L."/>
            <person name="Sheng Y."/>
            <person name="Shibata Y."/>
            <person name="Shimada H."/>
            <person name="Shimada K."/>
            <person name="Silva D."/>
            <person name="Sinclair B."/>
            <person name="Sperling S."/>
            <person name="Stupka E."/>
            <person name="Sugiura K."/>
            <person name="Sultana R."/>
            <person name="Takenaka Y."/>
            <person name="Taki K."/>
            <person name="Tammoja K."/>
            <person name="Tan S.L."/>
            <person name="Tang S."/>
            <person name="Taylor M.S."/>
            <person name="Tegner J."/>
            <person name="Teichmann S.A."/>
            <person name="Ueda H.R."/>
            <person name="van Nimwegen E."/>
            <person name="Verardo R."/>
            <person name="Wei C.L."/>
            <person name="Yagi K."/>
            <person name="Yamanishi H."/>
            <person name="Zabarovsky E."/>
            <person name="Zhu S."/>
            <person name="Zimmer A."/>
            <person name="Hide W."/>
            <person name="Bult C."/>
            <person name="Grimmond S.M."/>
            <person name="Teasdale R.D."/>
            <person name="Liu E.T."/>
            <person name="Brusic V."/>
            <person name="Quackenbush J."/>
            <person name="Wahlestedt C."/>
            <person name="Mattick J.S."/>
            <person name="Hume D.A."/>
            <person name="Kai C."/>
            <person name="Sasaki D."/>
            <person name="Tomaru Y."/>
            <person name="Fukuda S."/>
            <person name="Kanamori-Katayama M."/>
            <person name="Suzuki M."/>
            <person name="Aoki J."/>
            <person name="Arakawa T."/>
            <person name="Iida J."/>
            <person name="Imamura K."/>
            <person name="Itoh M."/>
            <person name="Kato T."/>
            <person name="Kawaji H."/>
            <person name="Kawagashira N."/>
            <person name="Kawashima T."/>
            <person name="Kojima M."/>
            <person name="Kondo S."/>
            <person name="Konno H."/>
            <person name="Nakano K."/>
            <person name="Ninomiya N."/>
            <person name="Nishio T."/>
            <person name="Okada M."/>
            <person name="Plessy C."/>
            <person name="Shibata K."/>
            <person name="Shiraki T."/>
            <person name="Suzuki S."/>
            <person name="Tagami M."/>
            <person name="Waki K."/>
            <person name="Watahiki A."/>
            <person name="Okamura-Oho Y."/>
            <person name="Suzuki H."/>
            <person name="Kawai J."/>
            <person name="Hayashizaki Y."/>
        </authorList>
    </citation>
    <scope>NUCLEOTIDE SEQUENCE [LARGE SCALE MRNA] (ISOFORMS 1 AND 2)</scope>
    <source>
        <strain>C57BL/6J</strain>
        <tissue>Olfactory bulb</tissue>
    </source>
</reference>
<reference key="2">
    <citation type="journal article" date="2009" name="PLoS Biol.">
        <title>Lineage-specific biology revealed by a finished genome assembly of the mouse.</title>
        <authorList>
            <person name="Church D.M."/>
            <person name="Goodstadt L."/>
            <person name="Hillier L.W."/>
            <person name="Zody M.C."/>
            <person name="Goldstein S."/>
            <person name="She X."/>
            <person name="Bult C.J."/>
            <person name="Agarwala R."/>
            <person name="Cherry J.L."/>
            <person name="DiCuccio M."/>
            <person name="Hlavina W."/>
            <person name="Kapustin Y."/>
            <person name="Meric P."/>
            <person name="Maglott D."/>
            <person name="Birtle Z."/>
            <person name="Marques A.C."/>
            <person name="Graves T."/>
            <person name="Zhou S."/>
            <person name="Teague B."/>
            <person name="Potamousis K."/>
            <person name="Churas C."/>
            <person name="Place M."/>
            <person name="Herschleb J."/>
            <person name="Runnheim R."/>
            <person name="Forrest D."/>
            <person name="Amos-Landgraf J."/>
            <person name="Schwartz D.C."/>
            <person name="Cheng Z."/>
            <person name="Lindblad-Toh K."/>
            <person name="Eichler E.E."/>
            <person name="Ponting C.P."/>
        </authorList>
    </citation>
    <scope>NUCLEOTIDE SEQUENCE [LARGE SCALE GENOMIC DNA]</scope>
    <source>
        <strain>C57BL/6J</strain>
    </source>
</reference>
<reference key="3">
    <citation type="submission" date="2005-07" db="EMBL/GenBank/DDBJ databases">
        <authorList>
            <person name="Mural R.J."/>
            <person name="Adams M.D."/>
            <person name="Myers E.W."/>
            <person name="Smith H.O."/>
            <person name="Venter J.C."/>
        </authorList>
    </citation>
    <scope>NUCLEOTIDE SEQUENCE [LARGE SCALE GENOMIC DNA]</scope>
</reference>
<reference key="4">
    <citation type="journal article" date="2004" name="Genome Res.">
        <title>The status, quality, and expansion of the NIH full-length cDNA project: the Mammalian Gene Collection (MGC).</title>
        <authorList>
            <consortium name="The MGC Project Team"/>
        </authorList>
    </citation>
    <scope>NUCLEOTIDE SEQUENCE [LARGE SCALE MRNA] (ISOFORM 1)</scope>
    <source>
        <tissue>Brain</tissue>
    </source>
</reference>
<reference key="5">
    <citation type="journal article" date="2011" name="PLoS ONE">
        <title>Structure-function study of mammalian Munc18-1 and C. elegans UNC-18 implicates domain 3b in the regulation of exocytosis.</title>
        <authorList>
            <person name="Graham M.E."/>
            <person name="Prescott G.R."/>
            <person name="Johnson J.R."/>
            <person name="Jones M."/>
            <person name="Walmesley A."/>
            <person name="Haynes L.P."/>
            <person name="Morgan A."/>
            <person name="Burgoyne R.D."/>
            <person name="Barclay J.W."/>
        </authorList>
    </citation>
    <scope>INTERACTION WITH STXBP1</scope>
</reference>
<reference key="6">
    <citation type="journal article" date="2013" name="PLoS ONE">
        <title>A new Mint1 isoform, but not the conventional Mint1, interacts with the small GTPase Rab6.</title>
        <authorList>
            <person name="Thyrock A."/>
            <person name="Ossendorf E."/>
            <person name="Stehling M."/>
            <person name="Kail M."/>
            <person name="Kurtz T."/>
            <person name="Pohlentz G."/>
            <person name="Waschbusch D."/>
            <person name="Eggert S."/>
            <person name="Formstecher E."/>
            <person name="Muthing J."/>
            <person name="Dreisewerd K."/>
            <person name="Kins S."/>
            <person name="Goud B."/>
            <person name="Barnekow A."/>
        </authorList>
    </citation>
    <scope>PROTEIN SEQUENCE OF 498-525 (ISOFORM 3)</scope>
    <scope>INTERACTION WITH RAB6A</scope>
    <scope>SUBCELLULAR LOCATION</scope>
    <scope>TISSUE SPECIFICITY</scope>
</reference>
<reference key="7">
    <citation type="journal article" date="2000" name="Science">
        <title>Kinesin superfamily motor protein KIF17 and mLin-10 in NMDA receptor-containing vesicle transport.</title>
        <authorList>
            <person name="Setou M."/>
            <person name="Nakagawa T."/>
            <person name="Seog D.-H."/>
            <person name="Hirokawa N."/>
        </authorList>
    </citation>
    <scope>FUNCTION</scope>
    <scope>IDENTIFICATION IN COMPLEX WITH CASK AND LIN7</scope>
    <scope>INTERACTION WITH KIF17</scope>
</reference>
<reference key="8">
    <citation type="journal article" date="2010" name="Cell">
        <title>A tissue-specific atlas of mouse protein phosphorylation and expression.</title>
        <authorList>
            <person name="Huttlin E.L."/>
            <person name="Jedrychowski M.P."/>
            <person name="Elias J.E."/>
            <person name="Goswami T."/>
            <person name="Rad R."/>
            <person name="Beausoleil S.A."/>
            <person name="Villen J."/>
            <person name="Haas W."/>
            <person name="Sowa M.E."/>
            <person name="Gygi S.P."/>
        </authorList>
    </citation>
    <scope>PHOSPHORYLATION [LARGE SCALE ANALYSIS] AT SER-82; SER-246; SER-250; SER-252; SER-267; SER-284; THR-309; SER-317; SER-372; THR-375; SER-406; SER-408 AND SER-413</scope>
    <scope>IDENTIFICATION BY MASS SPECTROMETRY [LARGE SCALE ANALYSIS]</scope>
    <source>
        <tissue>Brain</tissue>
        <tissue>Brown adipose tissue</tissue>
        <tissue>Heart</tissue>
        <tissue>Kidney</tissue>
        <tissue>Lung</tissue>
        <tissue>Pancreas</tissue>
        <tissue>Spleen</tissue>
        <tissue>Testis</tissue>
    </source>
</reference>
<name>APBA1_MOUSE</name>
<gene>
    <name evidence="12" type="primary">Apba1</name>
    <name evidence="12" type="synonym">Mint1</name>
    <name evidence="9" type="synonym">mLin-10</name>
    <name evidence="12" type="synonym">X11</name>
</gene>
<comment type="function">
    <text evidence="1 6">Putative function in synaptic vesicle exocytosis by binding to Munc18-1, an essential component of the synaptic vesicle exocytotic machinery. May modulate processing of the amyloid-beta precursor protein (APP) and hence formation of AAP-beta (By similarity). Component of the LIN-10-LIN-2-LIN-7 complex, which associates with the motor protein KIF17 to transport vesicles containing N-methyl-D-aspartate (NMDA) receptor subunit NR2B along microtubules (PubMed:10846156).</text>
</comment>
<comment type="subunit">
    <text evidence="1 6 7">Part of a multimeric complex containing STXBP1 and STX1A. Interacts with STXBP1 (PubMed:21445306). Component of the brain-specific heterotrimeric complex (LIN-10-LIN-2-LIN-7 complex) composed of at least APBA1, CASK, and LIN7, which associates with the motor protein KIF17 to transport vesicles along microtubules (PubMed:10846156). Within the complex, interacts (via PDZ domain) with the motor protein KIF17; the interaction is direct and is required for association of KIF17 with the cargo that is to be transported (PubMed:10846156). Binds to the cytoplasmic domain of amyloid protein (APP) (By similarity). Interacts (via PDZ 1 and 2 domains) with FSPB (By similarity). Isoform 3 interacts (via its truncated PID domain) with active, GTP-bound RAB6A. Also interacts with GTP-bound RAB6B (By similarity).</text>
</comment>
<comment type="subcellular location">
    <subcellularLocation>
        <location evidence="1">Cytoplasm</location>
    </subcellularLocation>
    <subcellularLocation>
        <location evidence="1">Cytoplasm</location>
        <location evidence="1">Perinuclear region</location>
    </subcellularLocation>
    <subcellularLocation>
        <location evidence="1">Nucleus</location>
    </subcellularLocation>
</comment>
<comment type="subcellular location">
    <molecule>Isoform 3</molecule>
    <subcellularLocation>
        <location>Golgi apparatus</location>
    </subcellularLocation>
</comment>
<comment type="alternative products">
    <event type="alternative splicing"/>
    <isoform>
        <id>B2RUJ5-1</id>
        <name>1</name>
        <sequence type="displayed"/>
    </isoform>
    <isoform>
        <id>B2RUJ5-2</id>
        <name>2</name>
        <sequence type="described" ref="VSP_043763 VSP_043764"/>
    </isoform>
    <isoform>
        <id>B2RUJ5-3</id>
        <name>3</name>
        <name>Mint1_826</name>
        <sequence type="described" ref="VSP_053519"/>
    </isoform>
</comment>
<comment type="tissue specificity">
    <text evidence="8">Isoform 3 is expressed in brain.</text>
</comment>
<comment type="domain">
    <text evidence="1">Composed of an N-terminal domain that binds Munc18-1 and LIN-2/CASK, a middle phosphotyrosine-binding domain (PID/PTB) that mediates binding with the cytoplasmic domain of the amyloid-beta precursor protein, and two C-terminal PDZ domains thought to attach proteins to the plasma membrane.</text>
</comment>
<comment type="domain">
    <text evidence="1">The autoinhibitory helix linker occludes the APP binding site.</text>
</comment>
<comment type="domain">
    <text evidence="1">The PID domain, truncated by 11 amino acids, as observed in isoform 3, but not full-length, mediates the interaction with RAB6A.</text>
</comment>
<comment type="miscellaneous">
    <molecule>Isoform 3</molecule>
    <text evidence="11">This isoform interacts with RAB6 GTPases.</text>
</comment>
<protein>
    <recommendedName>
        <fullName>Amyloid-beta A4 precursor protein-binding family A member 1</fullName>
    </recommendedName>
    <alternativeName>
        <fullName>Adapter protein X11alpha</fullName>
    </alternativeName>
    <alternativeName>
        <fullName>Neuron-specific X11 protein</fullName>
    </alternativeName>
    <alternativeName>
        <fullName>Neuronal Munc18-1-interacting protein 1</fullName>
        <shortName>Mint-1</shortName>
    </alternativeName>
</protein>
<feature type="chain" id="PRO_0000417501" description="Amyloid-beta A4 precursor protein-binding family A member 1">
    <location>
        <begin position="1"/>
        <end position="842"/>
    </location>
</feature>
<feature type="domain" description="PID" evidence="4">
    <location>
        <begin position="460"/>
        <end position="648"/>
    </location>
</feature>
<feature type="domain" description="PDZ 1" evidence="3">
    <location>
        <begin position="661"/>
        <end position="746"/>
    </location>
</feature>
<feature type="domain" description="PDZ 2" evidence="3">
    <location>
        <begin position="752"/>
        <end position="828"/>
    </location>
</feature>
<feature type="region of interest" description="Disordered" evidence="5">
    <location>
        <begin position="1"/>
        <end position="121"/>
    </location>
</feature>
<feature type="region of interest" description="Disordered" evidence="5">
    <location>
        <begin position="238"/>
        <end position="349"/>
    </location>
</feature>
<feature type="region of interest" description="Disordered" evidence="5">
    <location>
        <begin position="366"/>
        <end position="439"/>
    </location>
</feature>
<feature type="region of interest" description="Autoinhibitory helix linker" evidence="1">
    <location>
        <begin position="631"/>
        <end position="648"/>
    </location>
</feature>
<feature type="compositionally biased region" description="Basic and acidic residues" evidence="5">
    <location>
        <begin position="106"/>
        <end position="115"/>
    </location>
</feature>
<feature type="compositionally biased region" description="Basic and acidic residues" evidence="5">
    <location>
        <begin position="240"/>
        <end position="258"/>
    </location>
</feature>
<feature type="compositionally biased region" description="Basic and acidic residues" evidence="5">
    <location>
        <begin position="392"/>
        <end position="403"/>
    </location>
</feature>
<feature type="compositionally biased region" description="Low complexity" evidence="5">
    <location>
        <begin position="404"/>
        <end position="421"/>
    </location>
</feature>
<feature type="modified residue" description="Phosphoserine" evidence="13">
    <location>
        <position position="82"/>
    </location>
</feature>
<feature type="modified residue" description="Phosphoserine" evidence="13">
    <location>
        <position position="246"/>
    </location>
</feature>
<feature type="modified residue" description="Phosphoserine" evidence="13">
    <location>
        <position position="250"/>
    </location>
</feature>
<feature type="modified residue" description="Phosphoserine" evidence="13">
    <location>
        <position position="252"/>
    </location>
</feature>
<feature type="modified residue" description="Phosphoserine" evidence="13">
    <location>
        <position position="267"/>
    </location>
</feature>
<feature type="modified residue" description="Phosphoserine" evidence="13">
    <location>
        <position position="284"/>
    </location>
</feature>
<feature type="modified residue" description="Phosphoserine" evidence="2">
    <location>
        <position position="289"/>
    </location>
</feature>
<feature type="modified residue" description="Phosphothreonine" evidence="13">
    <location>
        <position position="309"/>
    </location>
</feature>
<feature type="modified residue" description="Phosphoserine" evidence="13">
    <location>
        <position position="317"/>
    </location>
</feature>
<feature type="modified residue" description="Phosphoserine" evidence="13">
    <location>
        <position position="372"/>
    </location>
</feature>
<feature type="modified residue" description="Phosphothreonine" evidence="13">
    <location>
        <position position="375"/>
    </location>
</feature>
<feature type="modified residue" description="Phosphoserine" evidence="13">
    <location>
        <position position="406"/>
    </location>
</feature>
<feature type="modified residue" description="Phosphoserine" evidence="13">
    <location>
        <position position="408"/>
    </location>
</feature>
<feature type="modified residue" description="Phosphoserine" evidence="13">
    <location>
        <position position="413"/>
    </location>
</feature>
<feature type="modified residue" description="Phosphoserine" evidence="2">
    <location>
        <position position="573"/>
    </location>
</feature>
<feature type="splice variant" id="VSP_043763" description="In isoform 2." evidence="10">
    <location>
        <begin position="1"/>
        <end position="390"/>
    </location>
</feature>
<feature type="splice variant" id="VSP_043764" description="In isoform 2." evidence="10">
    <original>SPTRDCDDQRPVDGD</original>
    <variation>MENFWMYQFESHEEE</variation>
    <location>
        <begin position="391"/>
        <end position="405"/>
    </location>
</feature>
<feature type="splice variant" id="VSP_053519" description="In isoform 3." evidence="11">
    <location>
        <begin position="500"/>
        <end position="510"/>
    </location>
</feature>
<feature type="sequence conflict" description="In Ref. 4; AAI41182." evidence="11" ref="4">
    <original>V</original>
    <variation>A</variation>
    <location>
        <position position="142"/>
    </location>
</feature>
<feature type="helix" evidence="14">
    <location>
        <begin position="352"/>
        <end position="367"/>
    </location>
</feature>
<dbReference type="EMBL" id="AK032261">
    <property type="protein sequence ID" value="BAC27784.1"/>
    <property type="molecule type" value="mRNA"/>
</dbReference>
<dbReference type="EMBL" id="AK147583">
    <property type="protein sequence ID" value="BAE28008.1"/>
    <property type="molecule type" value="mRNA"/>
</dbReference>
<dbReference type="EMBL" id="AC134830">
    <property type="status" value="NOT_ANNOTATED_CDS"/>
    <property type="molecule type" value="Genomic_DNA"/>
</dbReference>
<dbReference type="EMBL" id="AC148021">
    <property type="status" value="NOT_ANNOTATED_CDS"/>
    <property type="molecule type" value="Genomic_DNA"/>
</dbReference>
<dbReference type="EMBL" id="CH466534">
    <property type="protein sequence ID" value="EDL41607.1"/>
    <property type="molecule type" value="Genomic_DNA"/>
</dbReference>
<dbReference type="EMBL" id="CH466534">
    <property type="protein sequence ID" value="EDL41608.1"/>
    <property type="molecule type" value="Genomic_DNA"/>
</dbReference>
<dbReference type="EMBL" id="BC141181">
    <property type="protein sequence ID" value="AAI41182.1"/>
    <property type="molecule type" value="mRNA"/>
</dbReference>
<dbReference type="CCDS" id="CCDS50407.1">
    <molecule id="B2RUJ5-1"/>
</dbReference>
<dbReference type="RefSeq" id="NP_796008.2">
    <molecule id="B2RUJ5-1"/>
    <property type="nucleotide sequence ID" value="NM_177034.3"/>
</dbReference>
<dbReference type="RefSeq" id="XP_006527202.1">
    <molecule id="B2RUJ5-1"/>
    <property type="nucleotide sequence ID" value="XM_006527139.5"/>
</dbReference>
<dbReference type="RefSeq" id="XP_006527203.1">
    <molecule id="B2RUJ5-3"/>
    <property type="nucleotide sequence ID" value="XM_006527140.5"/>
</dbReference>
<dbReference type="RefSeq" id="XP_030106827.1">
    <molecule id="B2RUJ5-1"/>
    <property type="nucleotide sequence ID" value="XM_030250967.2"/>
</dbReference>
<dbReference type="RefSeq" id="XP_030106828.1">
    <molecule id="B2RUJ5-1"/>
    <property type="nucleotide sequence ID" value="XM_030250968.2"/>
</dbReference>
<dbReference type="RefSeq" id="XP_030106829.1">
    <molecule id="B2RUJ5-3"/>
    <property type="nucleotide sequence ID" value="XM_030250969.2"/>
</dbReference>
<dbReference type="PDB" id="6LNM">
    <property type="method" value="X-ray"/>
    <property type="resolution" value="2.40 A"/>
    <property type="chains" value="B/D/F=351-394"/>
</dbReference>
<dbReference type="PDBsum" id="6LNM"/>
<dbReference type="BMRB" id="B2RUJ5"/>
<dbReference type="SMR" id="B2RUJ5"/>
<dbReference type="BioGRID" id="235626">
    <property type="interactions" value="10"/>
</dbReference>
<dbReference type="ComplexPortal" id="CPX-7741">
    <property type="entry name" value="LIN-10-LIN-2-LIN-7 complex, LIN7A variant"/>
</dbReference>
<dbReference type="ComplexPortal" id="CPX-7742">
    <property type="entry name" value="LIN-10-LIN-2-LIN-7 complex, LIN7C variant"/>
</dbReference>
<dbReference type="ComplexPortal" id="CPX-884">
    <property type="entry name" value="LIN-10-LIN-2-LIN-7 complex, LIN7B variant"/>
</dbReference>
<dbReference type="CORUM" id="B2RUJ5"/>
<dbReference type="ELM" id="B2RUJ5"/>
<dbReference type="FunCoup" id="B2RUJ5">
    <property type="interactions" value="967"/>
</dbReference>
<dbReference type="IntAct" id="B2RUJ5">
    <property type="interactions" value="2"/>
</dbReference>
<dbReference type="STRING" id="10090.ENSMUSP00000025830"/>
<dbReference type="GlyGen" id="B2RUJ5">
    <property type="glycosylation" value="1 site"/>
</dbReference>
<dbReference type="iPTMnet" id="B2RUJ5"/>
<dbReference type="PhosphoSitePlus" id="B2RUJ5"/>
<dbReference type="jPOST" id="B2RUJ5"/>
<dbReference type="PaxDb" id="10090-ENSMUSP00000025830"/>
<dbReference type="PeptideAtlas" id="B2RUJ5"/>
<dbReference type="ProteomicsDB" id="296411">
    <molecule id="B2RUJ5-1"/>
</dbReference>
<dbReference type="ProteomicsDB" id="296412">
    <molecule id="B2RUJ5-2"/>
</dbReference>
<dbReference type="ProteomicsDB" id="296413">
    <molecule id="B2RUJ5-3"/>
</dbReference>
<dbReference type="Pumba" id="B2RUJ5"/>
<dbReference type="Antibodypedia" id="12360">
    <property type="antibodies" value="214 antibodies from 37 providers"/>
</dbReference>
<dbReference type="DNASU" id="319924"/>
<dbReference type="Ensembl" id="ENSMUST00000025830.9">
    <molecule id="B2RUJ5-1"/>
    <property type="protein sequence ID" value="ENSMUSP00000025830.8"/>
    <property type="gene ID" value="ENSMUSG00000024897.10"/>
</dbReference>
<dbReference type="Ensembl" id="ENSMUST00000237688.2">
    <molecule id="B2RUJ5-2"/>
    <property type="protein sequence ID" value="ENSMUSP00000157770.2"/>
    <property type="gene ID" value="ENSMUSG00000024897.10"/>
</dbReference>
<dbReference type="GeneID" id="319924"/>
<dbReference type="KEGG" id="mmu:319924"/>
<dbReference type="UCSC" id="uc008hai.1">
    <molecule id="B2RUJ5-1"/>
    <property type="organism name" value="mouse"/>
</dbReference>
<dbReference type="AGR" id="MGI:1860297"/>
<dbReference type="CTD" id="320"/>
<dbReference type="MGI" id="MGI:1860297">
    <property type="gene designation" value="Apba1"/>
</dbReference>
<dbReference type="VEuPathDB" id="HostDB:ENSMUSG00000024897"/>
<dbReference type="eggNOG" id="KOG3605">
    <property type="taxonomic scope" value="Eukaryota"/>
</dbReference>
<dbReference type="GeneTree" id="ENSGT00940000156820"/>
<dbReference type="HOGENOM" id="CLU_013563_1_0_1"/>
<dbReference type="InParanoid" id="B2RUJ5"/>
<dbReference type="OMA" id="SENCKDX"/>
<dbReference type="OrthoDB" id="5987010at2759"/>
<dbReference type="PhylomeDB" id="B2RUJ5"/>
<dbReference type="TreeFam" id="TF315245"/>
<dbReference type="Reactome" id="R-MMU-212676">
    <property type="pathway name" value="Dopamine Neurotransmitter Release Cycle"/>
</dbReference>
<dbReference type="BioGRID-ORCS" id="319924">
    <property type="hits" value="1 hit in 78 CRISPR screens"/>
</dbReference>
<dbReference type="ChiTaRS" id="Apba1">
    <property type="organism name" value="mouse"/>
</dbReference>
<dbReference type="PRO" id="PR:B2RUJ5"/>
<dbReference type="Proteomes" id="UP000000589">
    <property type="component" value="Chromosome 19"/>
</dbReference>
<dbReference type="RNAct" id="B2RUJ5">
    <property type="molecule type" value="protein"/>
</dbReference>
<dbReference type="Bgee" id="ENSMUSG00000024897">
    <property type="expression patterns" value="Expressed in habenula and 157 other cell types or tissues"/>
</dbReference>
<dbReference type="GO" id="GO:0005829">
    <property type="term" value="C:cytosol"/>
    <property type="evidence" value="ECO:0000304"/>
    <property type="project" value="Reactome"/>
</dbReference>
<dbReference type="GO" id="GO:0098978">
    <property type="term" value="C:glutamatergic synapse"/>
    <property type="evidence" value="ECO:0000314"/>
    <property type="project" value="SynGO"/>
</dbReference>
<dbReference type="GO" id="GO:0005794">
    <property type="term" value="C:Golgi apparatus"/>
    <property type="evidence" value="ECO:0007669"/>
    <property type="project" value="UniProtKB-SubCell"/>
</dbReference>
<dbReference type="GO" id="GO:0016020">
    <property type="term" value="C:membrane"/>
    <property type="evidence" value="ECO:0000314"/>
    <property type="project" value="MGI"/>
</dbReference>
<dbReference type="GO" id="GO:0005634">
    <property type="term" value="C:nucleus"/>
    <property type="evidence" value="ECO:0007669"/>
    <property type="project" value="UniProtKB-SubCell"/>
</dbReference>
<dbReference type="GO" id="GO:0048471">
    <property type="term" value="C:perinuclear region of cytoplasm"/>
    <property type="evidence" value="ECO:0007669"/>
    <property type="project" value="UniProtKB-SubCell"/>
</dbReference>
<dbReference type="GO" id="GO:0048787">
    <property type="term" value="C:presynaptic active zone membrane"/>
    <property type="evidence" value="ECO:0000314"/>
    <property type="project" value="SynGO"/>
</dbReference>
<dbReference type="GO" id="GO:0098685">
    <property type="term" value="C:Schaffer collateral - CA1 synapse"/>
    <property type="evidence" value="ECO:0000314"/>
    <property type="project" value="SynGO"/>
</dbReference>
<dbReference type="GO" id="GO:0007268">
    <property type="term" value="P:chemical synaptic transmission"/>
    <property type="evidence" value="ECO:0000315"/>
    <property type="project" value="MGI"/>
</dbReference>
<dbReference type="GO" id="GO:0051649">
    <property type="term" value="P:establishment of localization in cell"/>
    <property type="evidence" value="ECO:0000315"/>
    <property type="project" value="MGI"/>
</dbReference>
<dbReference type="GO" id="GO:0014051">
    <property type="term" value="P:gamma-aminobutyric acid secretion"/>
    <property type="evidence" value="ECO:0000315"/>
    <property type="project" value="MGI"/>
</dbReference>
<dbReference type="GO" id="GO:0014047">
    <property type="term" value="P:glutamate secretion"/>
    <property type="evidence" value="ECO:0000316"/>
    <property type="project" value="MGI"/>
</dbReference>
<dbReference type="GO" id="GO:0001701">
    <property type="term" value="P:in utero embryonic development"/>
    <property type="evidence" value="ECO:0000316"/>
    <property type="project" value="MGI"/>
</dbReference>
<dbReference type="GO" id="GO:0006886">
    <property type="term" value="P:intracellular protein transport"/>
    <property type="evidence" value="ECO:0000353"/>
    <property type="project" value="MGI"/>
</dbReference>
<dbReference type="GO" id="GO:0007626">
    <property type="term" value="P:locomotory behavior"/>
    <property type="evidence" value="ECO:0000316"/>
    <property type="project" value="MGI"/>
</dbReference>
<dbReference type="GO" id="GO:0035264">
    <property type="term" value="P:multicellular organism growth"/>
    <property type="evidence" value="ECO:0000316"/>
    <property type="project" value="MGI"/>
</dbReference>
<dbReference type="GO" id="GO:0099171">
    <property type="term" value="P:presynaptic modulation of chemical synaptic transmission"/>
    <property type="evidence" value="ECO:0000314"/>
    <property type="project" value="SynGO"/>
</dbReference>
<dbReference type="GO" id="GO:0010468">
    <property type="term" value="P:regulation of gene expression"/>
    <property type="evidence" value="ECO:0000316"/>
    <property type="project" value="MGI"/>
</dbReference>
<dbReference type="CDD" id="cd22578">
    <property type="entry name" value="Mint1_CID"/>
    <property type="match status" value="1"/>
</dbReference>
<dbReference type="CDD" id="cd06720">
    <property type="entry name" value="PDZ1_APBA1_3-like"/>
    <property type="match status" value="1"/>
</dbReference>
<dbReference type="CDD" id="cd06793">
    <property type="entry name" value="PDZ2_APBA1_3-like"/>
    <property type="match status" value="1"/>
</dbReference>
<dbReference type="CDD" id="cd01208">
    <property type="entry name" value="PTB_X11"/>
    <property type="match status" value="1"/>
</dbReference>
<dbReference type="FunFam" id="2.30.29.30:FF:000044">
    <property type="entry name" value="amyloid beta A4 precursor protein-binding family A member 1"/>
    <property type="match status" value="1"/>
</dbReference>
<dbReference type="FunFam" id="2.30.42.10:FF:000007">
    <property type="entry name" value="Amyloid beta A4 protein-binding family A member"/>
    <property type="match status" value="1"/>
</dbReference>
<dbReference type="FunFam" id="2.30.42.10:FF:000017">
    <property type="entry name" value="Amyloid beta A4 protein-binding family A member 1"/>
    <property type="match status" value="1"/>
</dbReference>
<dbReference type="Gene3D" id="2.30.42.10">
    <property type="match status" value="2"/>
</dbReference>
<dbReference type="Gene3D" id="2.30.29.30">
    <property type="entry name" value="Pleckstrin-homology domain (PH domain)/Phosphotyrosine-binding domain (PTB)"/>
    <property type="match status" value="1"/>
</dbReference>
<dbReference type="InterPro" id="IPR051230">
    <property type="entry name" value="APP-Binding"/>
</dbReference>
<dbReference type="InterPro" id="IPR001478">
    <property type="entry name" value="PDZ"/>
</dbReference>
<dbReference type="InterPro" id="IPR036034">
    <property type="entry name" value="PDZ_sf"/>
</dbReference>
<dbReference type="InterPro" id="IPR011993">
    <property type="entry name" value="PH-like_dom_sf"/>
</dbReference>
<dbReference type="InterPro" id="IPR006020">
    <property type="entry name" value="PTB/PI_dom"/>
</dbReference>
<dbReference type="PANTHER" id="PTHR12345:SF14">
    <property type="entry name" value="AMYLOID-BETA A4 PRECURSOR PROTEIN-BINDING FAMILY A MEMBER 1"/>
    <property type="match status" value="1"/>
</dbReference>
<dbReference type="PANTHER" id="PTHR12345">
    <property type="entry name" value="SYNTENIN RELATED"/>
    <property type="match status" value="1"/>
</dbReference>
<dbReference type="Pfam" id="PF00595">
    <property type="entry name" value="PDZ"/>
    <property type="match status" value="2"/>
</dbReference>
<dbReference type="Pfam" id="PF00640">
    <property type="entry name" value="PID"/>
    <property type="match status" value="1"/>
</dbReference>
<dbReference type="SMART" id="SM00228">
    <property type="entry name" value="PDZ"/>
    <property type="match status" value="2"/>
</dbReference>
<dbReference type="SMART" id="SM00462">
    <property type="entry name" value="PTB"/>
    <property type="match status" value="1"/>
</dbReference>
<dbReference type="SUPFAM" id="SSF50156">
    <property type="entry name" value="PDZ domain-like"/>
    <property type="match status" value="2"/>
</dbReference>
<dbReference type="SUPFAM" id="SSF50729">
    <property type="entry name" value="PH domain-like"/>
    <property type="match status" value="1"/>
</dbReference>
<dbReference type="PROSITE" id="PS50106">
    <property type="entry name" value="PDZ"/>
    <property type="match status" value="2"/>
</dbReference>
<dbReference type="PROSITE" id="PS01179">
    <property type="entry name" value="PID"/>
    <property type="match status" value="1"/>
</dbReference>
<keyword id="KW-0002">3D-structure</keyword>
<keyword id="KW-0025">Alternative splicing</keyword>
<keyword id="KW-0963">Cytoplasm</keyword>
<keyword id="KW-0903">Direct protein sequencing</keyword>
<keyword id="KW-0333">Golgi apparatus</keyword>
<keyword id="KW-0539">Nucleus</keyword>
<keyword id="KW-0597">Phosphoprotein</keyword>
<keyword id="KW-0653">Protein transport</keyword>
<keyword id="KW-1185">Reference proteome</keyword>
<keyword id="KW-0677">Repeat</keyword>
<keyword id="KW-0813">Transport</keyword>